<evidence type="ECO:0000255" key="1">
    <source>
        <dbReference type="HAMAP-Rule" id="MF_00050"/>
    </source>
</evidence>
<accession>Q8RT66</accession>
<accession>A1USE0</accession>
<proteinExistence type="inferred from homology"/>
<name>EFTS_BARBK</name>
<reference key="1">
    <citation type="submission" date="2002-01" db="EMBL/GenBank/DDBJ databases">
        <title>Translational machinery operon from Bartonella bacilliformis.</title>
        <authorList>
            <person name="Minnick M.F."/>
            <person name="Choquette L.E."/>
        </authorList>
    </citation>
    <scope>NUCLEOTIDE SEQUENCE [GENOMIC DNA]</scope>
</reference>
<reference key="2">
    <citation type="submission" date="2006-12" db="EMBL/GenBank/DDBJ databases">
        <authorList>
            <person name="Hendrix L."/>
            <person name="Mohamoud Y."/>
            <person name="Radune D."/>
            <person name="Shvartsbeyn A."/>
            <person name="Daugherty S."/>
            <person name="Dodson R."/>
            <person name="Durkin A.S."/>
            <person name="Harkins D."/>
            <person name="Huot H."/>
            <person name="Kothari S.P."/>
            <person name="Madupu R."/>
            <person name="Li J."/>
            <person name="Nelson W.C."/>
            <person name="Shrivastava S."/>
            <person name="Giglio M.G."/>
            <person name="Haft D."/>
            <person name="Selengut J."/>
            <person name="Fraser-Ligget C."/>
            <person name="Seshadri R."/>
        </authorList>
    </citation>
    <scope>NUCLEOTIDE SEQUENCE [LARGE SCALE GENOMIC DNA]</scope>
    <source>
        <strain>ATCC 35685 / KC583 / Herrer 020/F12,63</strain>
    </source>
</reference>
<gene>
    <name evidence="1" type="primary">tsf</name>
    <name type="synonym">eftS</name>
    <name type="ordered locus">BARBAKC583_0584</name>
</gene>
<keyword id="KW-0963">Cytoplasm</keyword>
<keyword id="KW-0251">Elongation factor</keyword>
<keyword id="KW-0648">Protein biosynthesis</keyword>
<organism>
    <name type="scientific">Bartonella bacilliformis (strain ATCC 35685 / KC583 / Herrer 020/F12,63)</name>
    <dbReference type="NCBI Taxonomy" id="360095"/>
    <lineage>
        <taxon>Bacteria</taxon>
        <taxon>Pseudomonadati</taxon>
        <taxon>Pseudomonadota</taxon>
        <taxon>Alphaproteobacteria</taxon>
        <taxon>Hyphomicrobiales</taxon>
        <taxon>Bartonellaceae</taxon>
        <taxon>Bartonella</taxon>
    </lineage>
</organism>
<sequence>MSITAAQVKELRELSGAGMMDCKAALMETNGDIETAVDWLRKKGMAKADKKAGRTAAEGLIGIASKGLSAVVVEVNSETDFVARNDAFQTIVRNVATAALDTEGSVESVSASIYPGSEKTVEEAIKDAIGTIGENMAFRRSAKLSVQNGAVATYIHNSVADGLGKLGVLVGIETTGDKEVAVDFARKVAMHIAATNPLALTVADVDASIVEREKAIFSDQARQSGKPENIIEKMVEGRIRKFYEEVVLLSQAFVMNPDVTVEASLKDAEKMIGAPAKITGFVRFALGEGVEKEEVDFAAEVAAAAKG</sequence>
<dbReference type="EMBL" id="AF469610">
    <property type="protein sequence ID" value="AAL82405.1"/>
    <property type="molecule type" value="Genomic_DNA"/>
</dbReference>
<dbReference type="EMBL" id="CP000524">
    <property type="protein sequence ID" value="ABM45297.1"/>
    <property type="molecule type" value="Genomic_DNA"/>
</dbReference>
<dbReference type="RefSeq" id="WP_005766749.1">
    <property type="nucleotide sequence ID" value="NC_008783.1"/>
</dbReference>
<dbReference type="SMR" id="Q8RT66"/>
<dbReference type="STRING" id="360095.BARBAKC583_0584"/>
<dbReference type="GeneID" id="4685041"/>
<dbReference type="KEGG" id="bbk:BARBAKC583_0584"/>
<dbReference type="PATRIC" id="fig|360095.6.peg.569"/>
<dbReference type="eggNOG" id="COG0264">
    <property type="taxonomic scope" value="Bacteria"/>
</dbReference>
<dbReference type="HOGENOM" id="CLU_047155_2_0_5"/>
<dbReference type="OrthoDB" id="9808348at2"/>
<dbReference type="Proteomes" id="UP000000643">
    <property type="component" value="Chromosome"/>
</dbReference>
<dbReference type="GO" id="GO:0005737">
    <property type="term" value="C:cytoplasm"/>
    <property type="evidence" value="ECO:0007669"/>
    <property type="project" value="UniProtKB-SubCell"/>
</dbReference>
<dbReference type="GO" id="GO:0003746">
    <property type="term" value="F:translation elongation factor activity"/>
    <property type="evidence" value="ECO:0007669"/>
    <property type="project" value="UniProtKB-UniRule"/>
</dbReference>
<dbReference type="CDD" id="cd14275">
    <property type="entry name" value="UBA_EF-Ts"/>
    <property type="match status" value="1"/>
</dbReference>
<dbReference type="FunFam" id="1.10.286.20:FF:000001">
    <property type="entry name" value="Elongation factor Ts"/>
    <property type="match status" value="1"/>
</dbReference>
<dbReference type="FunFam" id="1.10.8.10:FF:000001">
    <property type="entry name" value="Elongation factor Ts"/>
    <property type="match status" value="1"/>
</dbReference>
<dbReference type="Gene3D" id="1.10.286.20">
    <property type="match status" value="1"/>
</dbReference>
<dbReference type="Gene3D" id="1.10.8.10">
    <property type="entry name" value="DNA helicase RuvA subunit, C-terminal domain"/>
    <property type="match status" value="1"/>
</dbReference>
<dbReference type="Gene3D" id="3.30.479.20">
    <property type="entry name" value="Elongation factor Ts, dimerisation domain"/>
    <property type="match status" value="2"/>
</dbReference>
<dbReference type="HAMAP" id="MF_00050">
    <property type="entry name" value="EF_Ts"/>
    <property type="match status" value="1"/>
</dbReference>
<dbReference type="InterPro" id="IPR036402">
    <property type="entry name" value="EF-Ts_dimer_sf"/>
</dbReference>
<dbReference type="InterPro" id="IPR001816">
    <property type="entry name" value="Transl_elong_EFTs/EF1B"/>
</dbReference>
<dbReference type="InterPro" id="IPR014039">
    <property type="entry name" value="Transl_elong_EFTs/EF1B_dimer"/>
</dbReference>
<dbReference type="InterPro" id="IPR018101">
    <property type="entry name" value="Transl_elong_Ts_CS"/>
</dbReference>
<dbReference type="InterPro" id="IPR009060">
    <property type="entry name" value="UBA-like_sf"/>
</dbReference>
<dbReference type="NCBIfam" id="TIGR00116">
    <property type="entry name" value="tsf"/>
    <property type="match status" value="1"/>
</dbReference>
<dbReference type="PANTHER" id="PTHR11741">
    <property type="entry name" value="ELONGATION FACTOR TS"/>
    <property type="match status" value="1"/>
</dbReference>
<dbReference type="PANTHER" id="PTHR11741:SF0">
    <property type="entry name" value="ELONGATION FACTOR TS, MITOCHONDRIAL"/>
    <property type="match status" value="1"/>
</dbReference>
<dbReference type="Pfam" id="PF00889">
    <property type="entry name" value="EF_TS"/>
    <property type="match status" value="1"/>
</dbReference>
<dbReference type="SUPFAM" id="SSF54713">
    <property type="entry name" value="Elongation factor Ts (EF-Ts), dimerisation domain"/>
    <property type="match status" value="2"/>
</dbReference>
<dbReference type="SUPFAM" id="SSF46934">
    <property type="entry name" value="UBA-like"/>
    <property type="match status" value="1"/>
</dbReference>
<dbReference type="PROSITE" id="PS01127">
    <property type="entry name" value="EF_TS_2"/>
    <property type="match status" value="1"/>
</dbReference>
<protein>
    <recommendedName>
        <fullName evidence="1">Elongation factor Ts</fullName>
        <shortName evidence="1">EF-Ts</shortName>
    </recommendedName>
</protein>
<feature type="chain" id="PRO_0000161079" description="Elongation factor Ts">
    <location>
        <begin position="1"/>
        <end position="307"/>
    </location>
</feature>
<feature type="region of interest" description="Involved in Mg(2+) ion dislocation from EF-Tu" evidence="1">
    <location>
        <begin position="79"/>
        <end position="82"/>
    </location>
</feature>
<comment type="function">
    <text evidence="1">Associates with the EF-Tu.GDP complex and induces the exchange of GDP to GTP. It remains bound to the aminoacyl-tRNA.EF-Tu.GTP complex up to the GTP hydrolysis stage on the ribosome.</text>
</comment>
<comment type="subcellular location">
    <subcellularLocation>
        <location evidence="1">Cytoplasm</location>
    </subcellularLocation>
</comment>
<comment type="similarity">
    <text evidence="1">Belongs to the EF-Ts family.</text>
</comment>